<sequence length="73" mass="8182">MKANIHPDYHTIKVVMTDGTEYMTRSTWGKEGDTMNLDIDPTTHPAWTGGSQTLLDRGGRVTKFKNRFGNLGI</sequence>
<protein>
    <recommendedName>
        <fullName evidence="1">Large ribosomal subunit protein bL31</fullName>
    </recommendedName>
    <alternativeName>
        <fullName evidence="2">50S ribosomal protein L31</fullName>
    </alternativeName>
</protein>
<organism>
    <name type="scientific">Brucella suis biovar 1 (strain 1330)</name>
    <dbReference type="NCBI Taxonomy" id="204722"/>
    <lineage>
        <taxon>Bacteria</taxon>
        <taxon>Pseudomonadati</taxon>
        <taxon>Pseudomonadota</taxon>
        <taxon>Alphaproteobacteria</taxon>
        <taxon>Hyphomicrobiales</taxon>
        <taxon>Brucellaceae</taxon>
        <taxon>Brucella/Ochrobactrum group</taxon>
        <taxon>Brucella</taxon>
    </lineage>
</organism>
<reference key="1">
    <citation type="journal article" date="2002" name="Proc. Natl. Acad. Sci. U.S.A.">
        <title>The Brucella suis genome reveals fundamental similarities between animal and plant pathogens and symbionts.</title>
        <authorList>
            <person name="Paulsen I.T."/>
            <person name="Seshadri R."/>
            <person name="Nelson K.E."/>
            <person name="Eisen J.A."/>
            <person name="Heidelberg J.F."/>
            <person name="Read T.D."/>
            <person name="Dodson R.J."/>
            <person name="Umayam L.A."/>
            <person name="Brinkac L.M."/>
            <person name="Beanan M.J."/>
            <person name="Daugherty S.C."/>
            <person name="DeBoy R.T."/>
            <person name="Durkin A.S."/>
            <person name="Kolonay J.F."/>
            <person name="Madupu R."/>
            <person name="Nelson W.C."/>
            <person name="Ayodeji B."/>
            <person name="Kraul M."/>
            <person name="Shetty J."/>
            <person name="Malek J.A."/>
            <person name="Van Aken S.E."/>
            <person name="Riedmuller S."/>
            <person name="Tettelin H."/>
            <person name="Gill S.R."/>
            <person name="White O."/>
            <person name="Salzberg S.L."/>
            <person name="Hoover D.L."/>
            <person name="Lindler L.E."/>
            <person name="Halling S.M."/>
            <person name="Boyle S.M."/>
            <person name="Fraser C.M."/>
        </authorList>
    </citation>
    <scope>NUCLEOTIDE SEQUENCE [LARGE SCALE GENOMIC DNA]</scope>
    <source>
        <strain>1330</strain>
    </source>
</reference>
<reference key="2">
    <citation type="journal article" date="2011" name="J. Bacteriol.">
        <title>Revised genome sequence of Brucella suis 1330.</title>
        <authorList>
            <person name="Tae H."/>
            <person name="Shallom S."/>
            <person name="Settlage R."/>
            <person name="Preston D."/>
            <person name="Adams L.G."/>
            <person name="Garner H.R."/>
        </authorList>
    </citation>
    <scope>NUCLEOTIDE SEQUENCE [LARGE SCALE GENOMIC DNA]</scope>
    <source>
        <strain>1330</strain>
    </source>
</reference>
<keyword id="KW-0687">Ribonucleoprotein</keyword>
<keyword id="KW-0689">Ribosomal protein</keyword>
<keyword id="KW-0694">RNA-binding</keyword>
<keyword id="KW-0699">rRNA-binding</keyword>
<comment type="function">
    <text evidence="1">Binds the 23S rRNA.</text>
</comment>
<comment type="subunit">
    <text evidence="1">Part of the 50S ribosomal subunit.</text>
</comment>
<comment type="similarity">
    <text evidence="1">Belongs to the bacterial ribosomal protein bL31 family. Type A subfamily.</text>
</comment>
<dbReference type="EMBL" id="AE014291">
    <property type="protein sequence ID" value="AAN30616.1"/>
    <property type="molecule type" value="Genomic_DNA"/>
</dbReference>
<dbReference type="EMBL" id="CP002997">
    <property type="protein sequence ID" value="AEM19033.1"/>
    <property type="molecule type" value="Genomic_DNA"/>
</dbReference>
<dbReference type="RefSeq" id="WP_002964804.1">
    <property type="nucleotide sequence ID" value="NZ_KN046804.1"/>
</dbReference>
<dbReference type="SMR" id="P66184"/>
<dbReference type="GeneID" id="97533132"/>
<dbReference type="KEGG" id="bms:BR1716"/>
<dbReference type="KEGG" id="bsi:BS1330_I1710"/>
<dbReference type="PATRIC" id="fig|204722.21.peg.2382"/>
<dbReference type="HOGENOM" id="CLU_114306_3_2_5"/>
<dbReference type="Proteomes" id="UP000007104">
    <property type="component" value="Chromosome I"/>
</dbReference>
<dbReference type="GO" id="GO:1990904">
    <property type="term" value="C:ribonucleoprotein complex"/>
    <property type="evidence" value="ECO:0007669"/>
    <property type="project" value="UniProtKB-KW"/>
</dbReference>
<dbReference type="GO" id="GO:0005840">
    <property type="term" value="C:ribosome"/>
    <property type="evidence" value="ECO:0007669"/>
    <property type="project" value="UniProtKB-KW"/>
</dbReference>
<dbReference type="GO" id="GO:0019843">
    <property type="term" value="F:rRNA binding"/>
    <property type="evidence" value="ECO:0007669"/>
    <property type="project" value="UniProtKB-KW"/>
</dbReference>
<dbReference type="GO" id="GO:0003735">
    <property type="term" value="F:structural constituent of ribosome"/>
    <property type="evidence" value="ECO:0007669"/>
    <property type="project" value="InterPro"/>
</dbReference>
<dbReference type="GO" id="GO:0006412">
    <property type="term" value="P:translation"/>
    <property type="evidence" value="ECO:0007669"/>
    <property type="project" value="UniProtKB-UniRule"/>
</dbReference>
<dbReference type="Gene3D" id="4.10.830.30">
    <property type="entry name" value="Ribosomal protein L31"/>
    <property type="match status" value="1"/>
</dbReference>
<dbReference type="HAMAP" id="MF_00501">
    <property type="entry name" value="Ribosomal_bL31_1"/>
    <property type="match status" value="1"/>
</dbReference>
<dbReference type="InterPro" id="IPR034704">
    <property type="entry name" value="Ribosomal_bL28/bL31-like_sf"/>
</dbReference>
<dbReference type="InterPro" id="IPR002150">
    <property type="entry name" value="Ribosomal_bL31"/>
</dbReference>
<dbReference type="InterPro" id="IPR027491">
    <property type="entry name" value="Ribosomal_bL31_A"/>
</dbReference>
<dbReference type="InterPro" id="IPR042105">
    <property type="entry name" value="Ribosomal_bL31_sf"/>
</dbReference>
<dbReference type="NCBIfam" id="TIGR00105">
    <property type="entry name" value="L31"/>
    <property type="match status" value="1"/>
</dbReference>
<dbReference type="NCBIfam" id="NF001809">
    <property type="entry name" value="PRK00528.1"/>
    <property type="match status" value="1"/>
</dbReference>
<dbReference type="PANTHER" id="PTHR33280">
    <property type="entry name" value="50S RIBOSOMAL PROTEIN L31, CHLOROPLASTIC"/>
    <property type="match status" value="1"/>
</dbReference>
<dbReference type="PANTHER" id="PTHR33280:SF6">
    <property type="entry name" value="LARGE RIBOSOMAL SUBUNIT PROTEIN BL31A"/>
    <property type="match status" value="1"/>
</dbReference>
<dbReference type="Pfam" id="PF01197">
    <property type="entry name" value="Ribosomal_L31"/>
    <property type="match status" value="1"/>
</dbReference>
<dbReference type="PRINTS" id="PR01249">
    <property type="entry name" value="RIBOSOMALL31"/>
</dbReference>
<dbReference type="SUPFAM" id="SSF143800">
    <property type="entry name" value="L28p-like"/>
    <property type="match status" value="1"/>
</dbReference>
<dbReference type="PROSITE" id="PS01143">
    <property type="entry name" value="RIBOSOMAL_L31"/>
    <property type="match status" value="1"/>
</dbReference>
<evidence type="ECO:0000255" key="1">
    <source>
        <dbReference type="HAMAP-Rule" id="MF_00501"/>
    </source>
</evidence>
<evidence type="ECO:0000305" key="2"/>
<proteinExistence type="inferred from homology"/>
<name>RL31_BRUSU</name>
<gene>
    <name evidence="1" type="primary">rpmE</name>
    <name type="ordered locus">BR1716</name>
    <name type="ordered locus">BS1330_I1710</name>
</gene>
<feature type="chain" id="PRO_0000173086" description="Large ribosomal subunit protein bL31">
    <location>
        <begin position="1"/>
        <end position="73"/>
    </location>
</feature>
<accession>P66184</accession>
<accession>G0K6X8</accession>
<accession>Q8YIW7</accession>